<accession>Q8UEL0</accession>
<keyword id="KW-0997">Cell inner membrane</keyword>
<keyword id="KW-1003">Cell membrane</keyword>
<keyword id="KW-0472">Membrane</keyword>
<keyword id="KW-1185">Reference proteome</keyword>
<feature type="chain" id="PRO_0000171786" description="Putative membrane protein insertion efficiency factor">
    <location>
        <begin position="1"/>
        <end position="119"/>
    </location>
</feature>
<protein>
    <recommendedName>
        <fullName evidence="1">Putative membrane protein insertion efficiency factor</fullName>
    </recommendedName>
</protein>
<comment type="function">
    <text evidence="1">Could be involved in insertion of integral membrane proteins into the membrane.</text>
</comment>
<comment type="subcellular location">
    <subcellularLocation>
        <location evidence="1">Cell inner membrane</location>
        <topology evidence="1">Peripheral membrane protein</topology>
        <orientation evidence="1">Cytoplasmic side</orientation>
    </subcellularLocation>
</comment>
<comment type="similarity">
    <text evidence="1">Belongs to the UPF0161 family.</text>
</comment>
<organism>
    <name type="scientific">Agrobacterium fabrum (strain C58 / ATCC 33970)</name>
    <name type="common">Agrobacterium tumefaciens (strain C58)</name>
    <dbReference type="NCBI Taxonomy" id="176299"/>
    <lineage>
        <taxon>Bacteria</taxon>
        <taxon>Pseudomonadati</taxon>
        <taxon>Pseudomonadota</taxon>
        <taxon>Alphaproteobacteria</taxon>
        <taxon>Hyphomicrobiales</taxon>
        <taxon>Rhizobiaceae</taxon>
        <taxon>Rhizobium/Agrobacterium group</taxon>
        <taxon>Agrobacterium</taxon>
        <taxon>Agrobacterium tumefaciens complex</taxon>
    </lineage>
</organism>
<evidence type="ECO:0000255" key="1">
    <source>
        <dbReference type="HAMAP-Rule" id="MF_00386"/>
    </source>
</evidence>
<gene>
    <name type="ordered locus">Atu1747</name>
    <name type="ORF">AGR_C_3208</name>
</gene>
<proteinExistence type="inferred from homology"/>
<dbReference type="EMBL" id="AE007869">
    <property type="protein sequence ID" value="AAK87517.1"/>
    <property type="molecule type" value="Genomic_DNA"/>
</dbReference>
<dbReference type="PIR" id="AD2791">
    <property type="entry name" value="AD2791"/>
</dbReference>
<dbReference type="PIR" id="D97570">
    <property type="entry name" value="D97570"/>
</dbReference>
<dbReference type="RefSeq" id="NP_354732.1">
    <property type="nucleotide sequence ID" value="NC_003062.2"/>
</dbReference>
<dbReference type="RefSeq" id="WP_006314346.1">
    <property type="nucleotide sequence ID" value="NC_003062.2"/>
</dbReference>
<dbReference type="STRING" id="176299.Atu1747"/>
<dbReference type="DNASU" id="1133785"/>
<dbReference type="EnsemblBacteria" id="AAK87517">
    <property type="protein sequence ID" value="AAK87517"/>
    <property type="gene ID" value="Atu1747"/>
</dbReference>
<dbReference type="GeneID" id="1133785"/>
<dbReference type="KEGG" id="atu:Atu1747"/>
<dbReference type="PATRIC" id="fig|176299.10.peg.1760"/>
<dbReference type="eggNOG" id="COG0759">
    <property type="taxonomic scope" value="Bacteria"/>
</dbReference>
<dbReference type="HOGENOM" id="CLU_144811_0_1_5"/>
<dbReference type="OrthoDB" id="9801753at2"/>
<dbReference type="PhylomeDB" id="Q8UEL0"/>
<dbReference type="Proteomes" id="UP000000813">
    <property type="component" value="Chromosome circular"/>
</dbReference>
<dbReference type="GO" id="GO:0005886">
    <property type="term" value="C:plasma membrane"/>
    <property type="evidence" value="ECO:0007669"/>
    <property type="project" value="UniProtKB-SubCell"/>
</dbReference>
<dbReference type="HAMAP" id="MF_00386">
    <property type="entry name" value="UPF0161_YidD"/>
    <property type="match status" value="1"/>
</dbReference>
<dbReference type="InterPro" id="IPR002696">
    <property type="entry name" value="Membr_insert_effic_factor_YidD"/>
</dbReference>
<dbReference type="NCBIfam" id="TIGR00278">
    <property type="entry name" value="membrane protein insertion efficiency factor YidD"/>
    <property type="match status" value="1"/>
</dbReference>
<dbReference type="PANTHER" id="PTHR33383">
    <property type="entry name" value="MEMBRANE PROTEIN INSERTION EFFICIENCY FACTOR-RELATED"/>
    <property type="match status" value="1"/>
</dbReference>
<dbReference type="PANTHER" id="PTHR33383:SF1">
    <property type="entry name" value="MEMBRANE PROTEIN INSERTION EFFICIENCY FACTOR-RELATED"/>
    <property type="match status" value="1"/>
</dbReference>
<dbReference type="Pfam" id="PF01809">
    <property type="entry name" value="YidD"/>
    <property type="match status" value="1"/>
</dbReference>
<dbReference type="SMART" id="SM01234">
    <property type="entry name" value="Haemolytic"/>
    <property type="match status" value="1"/>
</dbReference>
<name>YIDD_AGRFC</name>
<sequence>MCGEPGCRHEQTAVKAGRSRNWAGSFAKTPGRLFGVGFIRLYQLTLSGFVGNSCRHIPTCSEYGYEAIARHGLWAGGWMALFRVARCGPGGTSGLDPVPEELDGSKRWWTPWRYWSRHR</sequence>
<reference key="1">
    <citation type="journal article" date="2001" name="Science">
        <title>The genome of the natural genetic engineer Agrobacterium tumefaciens C58.</title>
        <authorList>
            <person name="Wood D.W."/>
            <person name="Setubal J.C."/>
            <person name="Kaul R."/>
            <person name="Monks D.E."/>
            <person name="Kitajima J.P."/>
            <person name="Okura V.K."/>
            <person name="Zhou Y."/>
            <person name="Chen L."/>
            <person name="Wood G.E."/>
            <person name="Almeida N.F. Jr."/>
            <person name="Woo L."/>
            <person name="Chen Y."/>
            <person name="Paulsen I.T."/>
            <person name="Eisen J.A."/>
            <person name="Karp P.D."/>
            <person name="Bovee D. Sr."/>
            <person name="Chapman P."/>
            <person name="Clendenning J."/>
            <person name="Deatherage G."/>
            <person name="Gillet W."/>
            <person name="Grant C."/>
            <person name="Kutyavin T."/>
            <person name="Levy R."/>
            <person name="Li M.-J."/>
            <person name="McClelland E."/>
            <person name="Palmieri A."/>
            <person name="Raymond C."/>
            <person name="Rouse G."/>
            <person name="Saenphimmachak C."/>
            <person name="Wu Z."/>
            <person name="Romero P."/>
            <person name="Gordon D."/>
            <person name="Zhang S."/>
            <person name="Yoo H."/>
            <person name="Tao Y."/>
            <person name="Biddle P."/>
            <person name="Jung M."/>
            <person name="Krespan W."/>
            <person name="Perry M."/>
            <person name="Gordon-Kamm B."/>
            <person name="Liao L."/>
            <person name="Kim S."/>
            <person name="Hendrick C."/>
            <person name="Zhao Z.-Y."/>
            <person name="Dolan M."/>
            <person name="Chumley F."/>
            <person name="Tingey S.V."/>
            <person name="Tomb J.-F."/>
            <person name="Gordon M.P."/>
            <person name="Olson M.V."/>
            <person name="Nester E.W."/>
        </authorList>
    </citation>
    <scope>NUCLEOTIDE SEQUENCE [LARGE SCALE GENOMIC DNA]</scope>
    <source>
        <strain>C58 / ATCC 33970</strain>
    </source>
</reference>
<reference key="2">
    <citation type="journal article" date="2001" name="Science">
        <title>Genome sequence of the plant pathogen and biotechnology agent Agrobacterium tumefaciens C58.</title>
        <authorList>
            <person name="Goodner B."/>
            <person name="Hinkle G."/>
            <person name="Gattung S."/>
            <person name="Miller N."/>
            <person name="Blanchard M."/>
            <person name="Qurollo B."/>
            <person name="Goldman B.S."/>
            <person name="Cao Y."/>
            <person name="Askenazi M."/>
            <person name="Halling C."/>
            <person name="Mullin L."/>
            <person name="Houmiel K."/>
            <person name="Gordon J."/>
            <person name="Vaudin M."/>
            <person name="Iartchouk O."/>
            <person name="Epp A."/>
            <person name="Liu F."/>
            <person name="Wollam C."/>
            <person name="Allinger M."/>
            <person name="Doughty D."/>
            <person name="Scott C."/>
            <person name="Lappas C."/>
            <person name="Markelz B."/>
            <person name="Flanagan C."/>
            <person name="Crowell C."/>
            <person name="Gurson J."/>
            <person name="Lomo C."/>
            <person name="Sear C."/>
            <person name="Strub G."/>
            <person name="Cielo C."/>
            <person name="Slater S."/>
        </authorList>
    </citation>
    <scope>NUCLEOTIDE SEQUENCE [LARGE SCALE GENOMIC DNA]</scope>
    <source>
        <strain>C58 / ATCC 33970</strain>
    </source>
</reference>